<name>PMGT2_TETNG</name>
<feature type="chain" id="PRO_0000249021" description="Protein O-linked-mannose beta-1,4-N-acetylglucosaminyltransferase 2">
    <location>
        <begin position="1"/>
        <end position="579"/>
    </location>
</feature>
<feature type="topological domain" description="Cytoplasmic" evidence="2">
    <location>
        <begin position="1"/>
        <end position="4"/>
    </location>
</feature>
<feature type="transmembrane region" description="Helical; Signal-anchor for type II membrane protein" evidence="2">
    <location>
        <begin position="5"/>
        <end position="25"/>
    </location>
</feature>
<feature type="topological domain" description="Lumenal" evidence="2">
    <location>
        <begin position="26"/>
        <end position="579"/>
    </location>
</feature>
<feature type="domain" description="Fibronectin type-III" evidence="3">
    <location>
        <begin position="480"/>
        <end position="579"/>
    </location>
</feature>
<feature type="glycosylation site" description="N-linked (GlcNAc...) asparagine" evidence="2">
    <location>
        <position position="98"/>
    </location>
</feature>
<feature type="glycosylation site" description="N-linked (GlcNAc...) asparagine" evidence="2">
    <location>
        <position position="275"/>
    </location>
</feature>
<feature type="glycosylation site" description="N-linked (GlcNAc...) asparagine" evidence="2">
    <location>
        <position position="542"/>
    </location>
</feature>
<dbReference type="EC" id="2.4.1.312" evidence="1"/>
<dbReference type="EMBL" id="AJ868541">
    <property type="protein sequence ID" value="CAI30875.1"/>
    <property type="molecule type" value="mRNA"/>
</dbReference>
<dbReference type="EMBL" id="CAAE01013842">
    <property type="protein sequence ID" value="CAF95593.1"/>
    <property type="molecule type" value="Genomic_DNA"/>
</dbReference>
<dbReference type="SMR" id="Q5NDE3"/>
<dbReference type="FunCoup" id="Q5NDE3">
    <property type="interactions" value="63"/>
</dbReference>
<dbReference type="STRING" id="99883.ENSTNIP00000009240"/>
<dbReference type="CAZy" id="GT61">
    <property type="family name" value="Glycosyltransferase Family 61"/>
</dbReference>
<dbReference type="GlyCosmos" id="Q5NDE3">
    <property type="glycosylation" value="3 sites, No reported glycans"/>
</dbReference>
<dbReference type="Ensembl" id="ENSTNIT00000009411.1">
    <property type="protein sequence ID" value="ENSTNIP00000009240.1"/>
    <property type="gene ID" value="ENSTNIG00000006471.1"/>
</dbReference>
<dbReference type="KEGG" id="tng:GSTEN00012312G001"/>
<dbReference type="GeneTree" id="ENSGT00940000160695"/>
<dbReference type="HOGENOM" id="CLU_020169_0_0_1"/>
<dbReference type="InParanoid" id="Q5NDE3"/>
<dbReference type="OMA" id="EFQMRVV"/>
<dbReference type="OrthoDB" id="529273at2759"/>
<dbReference type="TreeFam" id="TF332712"/>
<dbReference type="UniPathway" id="UPA00378"/>
<dbReference type="Proteomes" id="UP000007303">
    <property type="component" value="Unassembled WGS sequence"/>
</dbReference>
<dbReference type="GO" id="GO:0005783">
    <property type="term" value="C:endoplasmic reticulum"/>
    <property type="evidence" value="ECO:0000250"/>
    <property type="project" value="UniProtKB"/>
</dbReference>
<dbReference type="GO" id="GO:0005789">
    <property type="term" value="C:endoplasmic reticulum membrane"/>
    <property type="evidence" value="ECO:0007669"/>
    <property type="project" value="UniProtKB-SubCell"/>
</dbReference>
<dbReference type="GO" id="GO:0008375">
    <property type="term" value="F:acetylglucosaminyltransferase activity"/>
    <property type="evidence" value="ECO:0000250"/>
    <property type="project" value="UniProtKB"/>
</dbReference>
<dbReference type="GO" id="GO:0097363">
    <property type="term" value="F:protein O-acetylglucosaminyltransferase activity"/>
    <property type="evidence" value="ECO:0007669"/>
    <property type="project" value="TreeGrafter"/>
</dbReference>
<dbReference type="GO" id="GO:0001764">
    <property type="term" value="P:neuron migration"/>
    <property type="evidence" value="ECO:0000250"/>
    <property type="project" value="UniProtKB"/>
</dbReference>
<dbReference type="GO" id="GO:0006493">
    <property type="term" value="P:protein O-linked glycosylation"/>
    <property type="evidence" value="ECO:0000250"/>
    <property type="project" value="UniProtKB"/>
</dbReference>
<dbReference type="GO" id="GO:0035269">
    <property type="term" value="P:protein O-linked mannosylation"/>
    <property type="evidence" value="ECO:0000250"/>
    <property type="project" value="UniProtKB"/>
</dbReference>
<dbReference type="CDD" id="cd00063">
    <property type="entry name" value="FN3"/>
    <property type="match status" value="1"/>
</dbReference>
<dbReference type="FunFam" id="2.60.40.10:FF:001371">
    <property type="entry name" value="Protein O-linked mannose N-acetylglucosaminyltransferase 2 (beta 1,4-)"/>
    <property type="match status" value="1"/>
</dbReference>
<dbReference type="Gene3D" id="2.60.40.10">
    <property type="entry name" value="Immunoglobulins"/>
    <property type="match status" value="1"/>
</dbReference>
<dbReference type="InterPro" id="IPR003961">
    <property type="entry name" value="FN3_dom"/>
</dbReference>
<dbReference type="InterPro" id="IPR036116">
    <property type="entry name" value="FN3_sf"/>
</dbReference>
<dbReference type="InterPro" id="IPR049625">
    <property type="entry name" value="Glyco_transf_61_cat"/>
</dbReference>
<dbReference type="InterPro" id="IPR007657">
    <property type="entry name" value="Glycosyltransferase_61"/>
</dbReference>
<dbReference type="InterPro" id="IPR013783">
    <property type="entry name" value="Ig-like_fold"/>
</dbReference>
<dbReference type="PANTHER" id="PTHR20961">
    <property type="entry name" value="GLYCOSYLTRANSFERASE"/>
    <property type="match status" value="1"/>
</dbReference>
<dbReference type="PANTHER" id="PTHR20961:SF38">
    <property type="entry name" value="PROTEIN O-LINKED-MANNOSE BETA-1,4-N-ACETYLGLUCOSAMINYLTRANSFERASE 2"/>
    <property type="match status" value="1"/>
</dbReference>
<dbReference type="Pfam" id="PF04577">
    <property type="entry name" value="Glyco_transf_61"/>
    <property type="match status" value="1"/>
</dbReference>
<dbReference type="SUPFAM" id="SSF49265">
    <property type="entry name" value="Fibronectin type III"/>
    <property type="match status" value="1"/>
</dbReference>
<dbReference type="PROSITE" id="PS50853">
    <property type="entry name" value="FN3"/>
    <property type="match status" value="1"/>
</dbReference>
<reference key="1">
    <citation type="submission" date="2004-12" db="EMBL/GenBank/DDBJ databases">
        <title>Phylogeny of xylosyltransferases.</title>
        <authorList>
            <person name="Kiefer-Meyer M.C."/>
            <person name="Pagny S."/>
            <person name="Durambure G."/>
            <person name="Faye L."/>
            <person name="Gomord V."/>
            <person name="Mollicone R."/>
            <person name="Oriol R."/>
        </authorList>
    </citation>
    <scope>NUCLEOTIDE SEQUENCE [MRNA]</scope>
</reference>
<reference key="2">
    <citation type="journal article" date="2004" name="Nature">
        <title>Genome duplication in the teleost fish Tetraodon nigroviridis reveals the early vertebrate proto-karyotype.</title>
        <authorList>
            <person name="Jaillon O."/>
            <person name="Aury J.-M."/>
            <person name="Brunet F."/>
            <person name="Petit J.-L."/>
            <person name="Stange-Thomann N."/>
            <person name="Mauceli E."/>
            <person name="Bouneau L."/>
            <person name="Fischer C."/>
            <person name="Ozouf-Costaz C."/>
            <person name="Bernot A."/>
            <person name="Nicaud S."/>
            <person name="Jaffe D."/>
            <person name="Fisher S."/>
            <person name="Lutfalla G."/>
            <person name="Dossat C."/>
            <person name="Segurens B."/>
            <person name="Dasilva C."/>
            <person name="Salanoubat M."/>
            <person name="Levy M."/>
            <person name="Boudet N."/>
            <person name="Castellano S."/>
            <person name="Anthouard V."/>
            <person name="Jubin C."/>
            <person name="Castelli V."/>
            <person name="Katinka M."/>
            <person name="Vacherie B."/>
            <person name="Biemont C."/>
            <person name="Skalli Z."/>
            <person name="Cattolico L."/>
            <person name="Poulain J."/>
            <person name="De Berardinis V."/>
            <person name="Cruaud C."/>
            <person name="Duprat S."/>
            <person name="Brottier P."/>
            <person name="Coutanceau J.-P."/>
            <person name="Gouzy J."/>
            <person name="Parra G."/>
            <person name="Lardier G."/>
            <person name="Chapple C."/>
            <person name="McKernan K.J."/>
            <person name="McEwan P."/>
            <person name="Bosak S."/>
            <person name="Kellis M."/>
            <person name="Volff J.-N."/>
            <person name="Guigo R."/>
            <person name="Zody M.C."/>
            <person name="Mesirov J."/>
            <person name="Lindblad-Toh K."/>
            <person name="Birren B."/>
            <person name="Nusbaum C."/>
            <person name="Kahn D."/>
            <person name="Robinson-Rechavi M."/>
            <person name="Laudet V."/>
            <person name="Schachter V."/>
            <person name="Quetier F."/>
            <person name="Saurin W."/>
            <person name="Scarpelli C."/>
            <person name="Wincker P."/>
            <person name="Lander E.S."/>
            <person name="Weissenbach J."/>
            <person name="Roest Crollius H."/>
        </authorList>
    </citation>
    <scope>NUCLEOTIDE SEQUENCE [LARGE SCALE GENOMIC DNA]</scope>
</reference>
<organism>
    <name type="scientific">Tetraodon nigroviridis</name>
    <name type="common">Spotted green pufferfish</name>
    <name type="synonym">Chelonodon nigroviridis</name>
    <dbReference type="NCBI Taxonomy" id="99883"/>
    <lineage>
        <taxon>Eukaryota</taxon>
        <taxon>Metazoa</taxon>
        <taxon>Chordata</taxon>
        <taxon>Craniata</taxon>
        <taxon>Vertebrata</taxon>
        <taxon>Euteleostomi</taxon>
        <taxon>Actinopterygii</taxon>
        <taxon>Neopterygii</taxon>
        <taxon>Teleostei</taxon>
        <taxon>Neoteleostei</taxon>
        <taxon>Acanthomorphata</taxon>
        <taxon>Eupercaria</taxon>
        <taxon>Tetraodontiformes</taxon>
        <taxon>Tetradontoidea</taxon>
        <taxon>Tetraodontidae</taxon>
        <taxon>Tetraodon</taxon>
    </lineage>
</organism>
<evidence type="ECO:0000250" key="1">
    <source>
        <dbReference type="UniProtKB" id="Q8NAT1"/>
    </source>
</evidence>
<evidence type="ECO:0000255" key="2"/>
<evidence type="ECO:0000255" key="3">
    <source>
        <dbReference type="PROSITE-ProRule" id="PRU00316"/>
    </source>
</evidence>
<evidence type="ECO:0000305" key="4"/>
<comment type="function">
    <text evidence="1">O-linked mannose beta-1,4-N-acetylglucosaminyltransferase that transfers UDP-N-acetyl-D-glucosamine to the 4-position of the mannose to generate N-acetyl-D-glucosamine-beta-1,4-O-D-mannosylprotein. Involved in the biosynthesis of the phosphorylated O-mannosyl trisaccharide (N-acetylgalactosamine-beta-3-N-acetylglucosamine-beta-4-(phosphate-6-)mannose), a carbohydrate structure present in alpha-dystroglycan (DAG1), which is required for binding laminin G-like domain-containing extracellular proteins with high affinity (By similarity).</text>
</comment>
<comment type="catalytic activity">
    <reaction evidence="1">
        <text>3-O-(alpha-D-mannosyl)-L-threonyl-[protein] + UDP-N-acetyl-alpha-D-glucosamine = 3-O-(N-acetyl-beta-D-glucosaminyl-(1-&gt;4)-alpha-D-mannosyl)-L-threonyl-[protein] + UDP + H(+)</text>
        <dbReference type="Rhea" id="RHEA:37663"/>
        <dbReference type="Rhea" id="RHEA-COMP:13547"/>
        <dbReference type="Rhea" id="RHEA-COMP:13618"/>
        <dbReference type="ChEBI" id="CHEBI:15378"/>
        <dbReference type="ChEBI" id="CHEBI:57705"/>
        <dbReference type="ChEBI" id="CHEBI:58223"/>
        <dbReference type="ChEBI" id="CHEBI:137323"/>
        <dbReference type="ChEBI" id="CHEBI:137540"/>
        <dbReference type="EC" id="2.4.1.312"/>
    </reaction>
</comment>
<comment type="pathway">
    <text evidence="1">Protein modification; protein glycosylation.</text>
</comment>
<comment type="subcellular location">
    <subcellularLocation>
        <location evidence="1">Endoplasmic reticulum membrane</location>
        <topology evidence="1">Single-pass type II membrane protein</topology>
    </subcellularLocation>
</comment>
<comment type="similarity">
    <text evidence="4">Belongs to the glycosyltransferase 61 family.</text>
</comment>
<protein>
    <recommendedName>
        <fullName>Protein O-linked-mannose beta-1,4-N-acetylglucosaminyltransferase 2</fullName>
        <shortName>POMGnT2</shortName>
        <ecNumber evidence="1">2.4.1.312</ecNumber>
    </recommendedName>
    <alternativeName>
        <fullName>Extracellular O-linked N-acetylglucosamine transferase-like</fullName>
    </alternativeName>
    <alternativeName>
        <fullName>Glycosyltransferase-like domain-containing protein 2</fullName>
    </alternativeName>
</protein>
<proteinExistence type="evidence at transcript level"/>
<sequence length="579" mass="66641">MGVGTLLNGLLVSVVAALLWKYSKLSEHAALLEEELHMTRRSQELSQAHIDYHVALQALQEHGTRMVCTGKMHTDRICRFDYLCYCSEAEEFVFFHSNSSVMLPNLGSRRFQPALLDLSSVEDHNTQYFNFLELPAATLRFLPKPVFVPDVALILNRFNPDNLMHVFHDDLLPAFYTMKQFLDLDEDARLVFMEGWDEGPHFHLYRLLSDKQPLLKEQLRNFGKLMCFTKSYIGLSKMTTWYQYGFVQPQGPKANILVSGNEIRHFAKVLMEKMNVTRAEGGQEDEYIVVFSRSSTRLILNQAELVMALAQEFQMRVVTVSLEEQSFASIVQVIGAASMLVSMHGAQLITALFLPPGAVVVELFPFAVNPDQYTPYRTLAALPGMDLHYISWRNTEEENTITHPDRPWEQGGIAHLEKEEQERIVASKDVPRHLCCRNPEWLFRIYQDTFVDIPSFLEALQAGLKAKPVWKKSKLSGGLHPGRVRDARCQTSVQTSSEAKLTVSWQMPWNLKYLKVREVKYEVWIQEQGENTYMPYILPQQNYTFSDNIKPFTTYLVWVRCIFNKNLLGPFADVLMCRT</sequence>
<accession>Q5NDE3</accession>
<keyword id="KW-0256">Endoplasmic reticulum</keyword>
<keyword id="KW-0325">Glycoprotein</keyword>
<keyword id="KW-0328">Glycosyltransferase</keyword>
<keyword id="KW-0472">Membrane</keyword>
<keyword id="KW-1185">Reference proteome</keyword>
<keyword id="KW-0735">Signal-anchor</keyword>
<keyword id="KW-0808">Transferase</keyword>
<keyword id="KW-0812">Transmembrane</keyword>
<keyword id="KW-1133">Transmembrane helix</keyword>
<gene>
    <name type="primary">pomgnt2</name>
    <name type="synonym">ago61</name>
    <name type="synonym">gtdc2</name>
    <name type="ORF">GSTENG00012312001</name>
</gene>